<proteinExistence type="inferred from homology"/>
<keyword id="KW-0112">Calmodulin-binding</keyword>
<keyword id="KW-0217">Developmental protein</keyword>
<keyword id="KW-0221">Differentiation</keyword>
<keyword id="KW-0479">Metal-binding</keyword>
<keyword id="KW-0524">Neurogenesis</keyword>
<keyword id="KW-1185">Reference proteome</keyword>
<keyword id="KW-0716">Sensory transduction</keyword>
<keyword id="KW-0844">Vision</keyword>
<keyword id="KW-0862">Zinc</keyword>
<keyword id="KW-0863">Zinc-finger</keyword>
<comment type="function">
    <text evidence="1">Has a role in growth of the perineurial glial layer of the larval peripheral nerve. May have a role in male fertility and eye development or function. May bind calmodulin (By similarity).</text>
</comment>
<comment type="similarity">
    <text evidence="5">Belongs to the UBR4 family.</text>
</comment>
<comment type="sequence caution" evidence="5">
    <conflict type="erroneous gene model prediction">
        <sequence resource="EMBL-CDS" id="EAL32985"/>
    </conflict>
</comment>
<sequence>MSSHSGGTDWNSVIKALLLSRTGALNKNEVVNLLKAITRCEHEFFDDEGSFVPFYTAFAALAADKLMQIKSICQTQICQLHDATAVLIRFILFRLPKVSVFESKWLLAALKMLCEGRENASSAVAQFDYSAVAGVVKSSKHPESSNKSIMSMAGSTTGGAGAGGSNDKESPKLEIKRSRSDLSSVILQQLLAPLEPGKMTWVPLSEEITDCTEQLLAANVEVFQEANGVDTLLDICVGLPILSRYRMKYMETINAGKPLYLPLTQAEATTVKSSMNHMLTDLSIVGQAYALIVMQPLTPSRIEKLSMCGISALYNAVLTSIATSVLSMGQASSAQKQQQQQTAAAASTSQGSGGGLSSVQTSKDHDEFEEQASGIVNKALEIYSSIGEMFKSSARMYIYQNHLCYGSWLLISGIQGAMGASGSASAETAAKAAAATKVASKTESITAPSTPIARVNLFKVQQGFGELNAAIANHSIKLLSELIEDLKIESACGQSSVTDPETLPEPAQFDILQNYTSLERIVRVLNTATLHQLFTFLATVAYRKACTLKRASTKDRTECDPISYSDSTTCLNESMSYSDNSEEDDSESYLGHWFKETLSPETHDDNANTSSQERSGEQKSALVPKLDEPHEYLELSADIFCFLDQFLANRHAYMQRYVKAGVSDQQMLLMANIIKDFDRDVMRNDSEQQSPPSTAAAVAAATGAGSSGSSAKWQASMIRFSGAAGRYIHNLISTGLLSEQLQSNLLQHLAISPWSTDTNTWPLQVYPSTLSVLVQILLLKPIQEKEAACLSVWHRLINTLVDGVCSSSSAGDSDYEDINIEHAQLLLFLFHSLNLMQKKSILLLTAGGVIRCAEVCRGISAERVVRNSQMMLLSRLLVFLEYLMKHLYHAPPELLDQVRWILFSVSSMPETQKVSDLINSRTKLNSYCRQDIEEKFRKSSGEYGSNIRPTFYSLVVKEPEKAYWVSEFKLDGLAWNFILCTPDKLKYPLLVDALVDILNIADMSSFSRKENSESNSIHNLCAMQYCFTNTWKLLLGLPPSTSHVEALRIERAPNLHSLVWSTRLPLATSHYLIVNSLIKQGMYTQYAESLYTQVGDTTADIRYNLKQTILGVEAFNQQMSNKGIPRLSELILFDALVAHMQAVAWAEKEGFKLLRKDCEDSSGGDQSSCTSAASSSGGNATDHDHPEVYSSNESIDEEKSKHEDDQGLSTETLQRNQMINELLIKLMDSYRYLSEIVREQMLKQLSSTTPEHVLNLIVPIVSDKPAIMLELHAAFLKLLPNEDKQLIANEWPKCLMVNDSAFDGKQHPVEPYTLNVIDAHITELTRGSGGVAYSTLHTLKHCLKTILHLMELLLPYASNCTEMDAQLKPLLIASMLDMRTDYLQGQSEQCLREILSGLTLEAQKLLLYEHMIGYCYRMLIEFAAELRQPAAGGTPLDQERALFNESMLFAVLKTFIKMLEKPTAVQAMRQFFHDQKTGSLTTLLLSFTGTTLPLSYARKMLQFVERLFEQSTRADSQFQHEDLVDCFSDLATVDVARLKLWLAHIIYGPNMTAGDVSNSETMDPTCRLLTSIMQPSSSSSSNAQTPTNMATVSAMPSISDQLDAMDIDYDCGAAAGAAGAAPNTSQILSLWQAAQPNPSEESSQACDHSEGGEQRQSERNGGLLLSITKYLVRDQSKAGPIAAPLFQALLQLGQTLISPPHDGCDFADVLQIMITLADASPARGHVALFNTTLLWLELAKLQLPDKHLRHAENVSALLRYLSELLQSIGYRGSRQHMPPWDDELQTDIDDLYDELAEEEQDSLLDDSDEDTLNNKLCTFSQTQKEFMNQHWYHCHTCNMINTVGVCSVCARVCHKGHDVSYAKYGNFFCDCGAKEDGSCQALSRRLGSGEVRESVGPGGSSSCSYLPSHMSLLASKKRSNTAPGATQQQHGAPARKDSISSERIQLLGKLLEPYRETLQHQEQWMLVVRCILEYFDVLLPSIRENCTLYSIVGCHRRATAALQRLHQLEQSFQITDQLMFATLGSQEGAFENVRMNYSGDQGQTIKHLLTSGTIRRVAFCCLSSPHGRRQQLAVSHEKGKVTILQLSALLKQADASKRKLTLTQLSSAPIACTVLSLAANPCNEDCLAVCGLKECHVLTFSSSGSTNEHIVITPQLENGNFLKKAMWLPGSQTLLAIVTTDYVKIYDLSVDTISPKYYYLVAVGKIKDCTFMYHQQDGSGSYFMLSFTSSGYIYTQQLDQQSLAVHGDFYVTNTLELSHQHIKDINGQVCGGGVSIYYSHALQLLFYSYTCGRSFCSPLTNVNEGVKGIYHLDINNTAASTASKSSSASKVPLQSLVGWTEVAGHPGLIYASMHTSNNPVILMITPERIYMQEIKAQSAKSRIMDVVGIRHSVAGTEKTTLLLLCEDGSLRIFSAQPEHTSFWLSPQVQPFGNQLYSSTLLAKNTTNNPQGKSKGGGSAAAGKLLHRKASSQQHQKQLTSGGQPIFPIDFFEHCNMLADVEFGGNDLLQIYNKQKLKTRLFSTGMFVASTKATGFTLEVVNNDPNVVMVGFRVMLGTQDIQRAPVSVTILGRTIPTTMRKARWFDIPLTREEMFQSDKMLKVVFAKSQDPEHVTLLDSIEVYGKSKELVGWPDDSEDVPAPSSGPTPVTATQQSAAANFGEGFNCITQLDRMVNHLLEVLDCALHLLGGSAVAAPLRSKVVKTASGLLLLPTPNPVQTQARYVLATLYGSRAAYHSFKDGVILHFVHGELQAMQPKLQQLESLQEIDPEAFYRLILLVRGVANSRPQSLAKICLENSYDLVPDLMRIVLELHKITPDLDEPVNIVRRGLCQPETIVHCLVEIMYGFALADPGQVGRMTQYFIDLLKHDATVISHSAKEALILLLSPRMKRRKVAAIAVITPPACSTPTPQMQALQAVAASAANDIIEEAAGVAAGQDQDNAAAALLEAVEGGLPGQQANHQLLNLEAFMGGGFPRLLGLPEDGDDEAIMDIAIALSLQQHGGADANALHSLQQGLANIQGIRQAAANAAAASVSVSVSAGGSDDEGSNVATDGSTLRTSPAEPAGSGGSESGGSGVESIGGTSARSSNFGDHPNTTPPRQSCSSVKDGEPGEEQQPGPSGSGGSASVPGGGLSAMSSTEDNNEINEDEKLQKLHDLRIAVLESIIQHLGTFDLCNGLQAIPLIQVIHMLTTDLNGNNERDQQVLQELLQALVEYVEIGKRGAASRMENKCPGNEVRLALLSLFGVMMGKTKSKQTGTTSPPHQFKDNSSFVASTTANVLSKSGAFVYALEALNTLLVHWKTVLGDPYAPGQAAAPIASGGATSGPGVQLLKPVKHGPKPDISILIPQNYLKNYPDIFESYDGLLTEIIVRLPYQILRLSSAHPDNYDSSFCEAMTFTLCEYMMLNLNTLLRRQVRKLLMYICGSKEKFRMYRDGHSLDAHFRVVKRVCSIVSSKTGAPYNANPPMLSYDSLVDLTEHLRTCQEISQMRTGNWQKFCVVHEDALAMLMEIACYQLDDGVSPIIIQLLQAAVCNMPANKQQQQQQQPPPAVVSASSKLRSDREKSEDTDAYYSKFDPAQCGTFVHQIFRYACDALIIRFVRIFLLENNISQLRWQAHSFMTGLFEHANERQREKLLTIFWNLWPLVPTYGRRTAQFVDLLGYLTLTTRSITERLPEFVSRAVEVLRTQNELLCKHPNAPVYTTLESILQMNGYYLESEPCLVCNNPEVPMANIKLPSVKSDSKYTTTTMIYKLVQCHTISKLIVRIADLKRTKMVRTINVYYNNRSVQAVVELKNRPALWHKARSVSLQSGQTELKIDFPLPITACNLMIEFADFFETVSGSSENLQCPRCSAAVPAYPGVCGNCGENVFQCHKCRAINYDEKDPFLCHSCGFCKYAKFDFSMYARVCCAVDPIESAEDRAKTVLMIHTSLERADRIYHQLLANKQLLELLIQKVAEHRINDRLVEDNMASVHSTSQVNKIIQLLAQKYCVESRASFEELSKIVQKVKACRSELVAYDRQQQDLPPSNLALVLGAENPTTNRCYGCALASTEQCLTLLRAMAYNYDCRMGLYSQGLVSELAEHNLRRGTPQIQNEVRNLLVVLTKDNAEACMHLLQLVTSRVKSALMGSIPLISLEAAVHQEMTLLEVLLSQDDLCWEYKLKVIFELFISNCKLPRGPVASVLHPCLRILQSLINPTISGSGSGGKPVSAIELSNIKLPEGNTIDYRAWLNSDQNHEYLAWSSRMPISHHQQDAPAGTKPKSSKQQQSAGTETPPRKSKEAARAAYLGEKFGKRWRSNVLDKQRVTKPLVFNAEWIQPLLFNENSRFGRQLACTLLGGLARTHERKQQALNLLTSFLYHVGDAGEASNEYLALYRSIATESPWLQYLVLRGVLCKISSLLATEIAKVHCMEEHSLSSDLTLGYALRRYVELLWLFLECPNIRRTYKTRLLGPVLESYLALRSLVVQRTRHIDEAQEKLLEMLEEMTSGTEEETRAFMEILIDTVDKTRMNDIKTPVFIFERLYSIIHPEEHDESEFYMTLEKDPQQEDFLQGRMLGNPYPSGEMGLGPLMRDVKNKICTDCELIALLEDDNGMELLVNNKIISLDLPVKDVYKKVWLAEGGDRDAMRIVYRMRGLLGDATEEFVETLNNKSQEAVDTEQLYRMANVLADCNGLRVMLDRIGSLQRISRQRELIQVLLKLFLICVKVRRCQEVLCQPEIGAINTLLKVLQMCLQSENDSIQSAVTEQLLEIMETLLSKAASDTLDSFLQFSLTFGGPEYVSALISCTDCPNVRNNPSVLRHLIRVLAALVYGNEVKMALLCEHFKDTLNFKRFDNERTPEEEFKLELFCVLTNQIEHNCIGGTLKDYIVSLGIVERSLAYITEHAPCVKPTLLRTDSDELKEFISRPSLKYILRFLTGLSNHHEATQVAISKDIIPIIHRLEQVSSDEHVGSLAENLLEALSTDAATAARVQQVRDFTRAEKKRLAMATREKQLDALGMRTNEKGQVTAKGSILQKIEKLRDETGLTCFICREGYACQPEKVLGIYTFTKRCNVEEFELKSRKTIGYTTVTHFNVVHVDCHTSAIRLTRGRDEWERASLQNANTRCNGLLPLWGPSVLETTFSASMTRHSSYMQESTQRCDISYTSSIHDLKLLLVRFAWERSFHDDAGGGGPQSNMHFVPYLLFYSIYMLLSSRSAARDSKTVLAYLTAPPSEKWLECGFEVEGPLYMITISVTLHSRELWNKHKVAHLKRMLAVAQARHVSPSVLCKALLAPADRQVKDYSVYKPYLMMWAMIDMIYNILFKLVTMPKEEAWPVSLFDYIRKNDEAMLKSTDGILHILTEELLPCTSFGEFCDVAGLLTLIEQPDSFIEDLLASLPSTTSSS</sequence>
<protein>
    <recommendedName>
        <fullName>Protein purity of essence</fullName>
    </recommendedName>
</protein>
<organism>
    <name type="scientific">Drosophila pseudoobscura pseudoobscura</name>
    <name type="common">Fruit fly</name>
    <dbReference type="NCBI Taxonomy" id="46245"/>
    <lineage>
        <taxon>Eukaryota</taxon>
        <taxon>Metazoa</taxon>
        <taxon>Ecdysozoa</taxon>
        <taxon>Arthropoda</taxon>
        <taxon>Hexapoda</taxon>
        <taxon>Insecta</taxon>
        <taxon>Pterygota</taxon>
        <taxon>Neoptera</taxon>
        <taxon>Endopterygota</taxon>
        <taxon>Diptera</taxon>
        <taxon>Brachycera</taxon>
        <taxon>Muscomorpha</taxon>
        <taxon>Ephydroidea</taxon>
        <taxon>Drosophilidae</taxon>
        <taxon>Drosophila</taxon>
        <taxon>Sophophora</taxon>
    </lineage>
</organism>
<name>POE_DROPS</name>
<dbReference type="EMBL" id="CH379061">
    <property type="protein sequence ID" value="EAL32985.1"/>
    <property type="status" value="ALT_SEQ"/>
    <property type="molecule type" value="Genomic_DNA"/>
</dbReference>
<dbReference type="RefSeq" id="XP_001355926.1">
    <property type="nucleotide sequence ID" value="XM_001355890.3"/>
</dbReference>
<dbReference type="SMR" id="Q29L39"/>
<dbReference type="FunCoup" id="Q29L39">
    <property type="interactions" value="1864"/>
</dbReference>
<dbReference type="STRING" id="46245.Q29L39"/>
<dbReference type="EnsemblMetazoa" id="FBtr0289276">
    <property type="protein sequence ID" value="FBpp0287714"/>
    <property type="gene ID" value="FBgn0073048"/>
</dbReference>
<dbReference type="GeneID" id="4816331"/>
<dbReference type="KEGG" id="dpo:4816331"/>
<dbReference type="CTD" id="46243"/>
<dbReference type="eggNOG" id="KOG1776">
    <property type="taxonomic scope" value="Eukaryota"/>
</dbReference>
<dbReference type="HOGENOM" id="CLU_000069_0_0_1"/>
<dbReference type="InParanoid" id="Q29L39"/>
<dbReference type="OMA" id="VHRMEEH"/>
<dbReference type="PhylomeDB" id="Q29L39"/>
<dbReference type="Proteomes" id="UP000001819">
    <property type="component" value="Chromosome 4"/>
</dbReference>
<dbReference type="Bgee" id="FBgn0073048">
    <property type="expression patterns" value="Expressed in adult organism and 3 other cell types or tissues"/>
</dbReference>
<dbReference type="GO" id="GO:0005516">
    <property type="term" value="F:calmodulin binding"/>
    <property type="evidence" value="ECO:0000250"/>
    <property type="project" value="UniProtKB"/>
</dbReference>
<dbReference type="GO" id="GO:0008270">
    <property type="term" value="F:zinc ion binding"/>
    <property type="evidence" value="ECO:0007669"/>
    <property type="project" value="UniProtKB-KW"/>
</dbReference>
<dbReference type="GO" id="GO:0007399">
    <property type="term" value="P:nervous system development"/>
    <property type="evidence" value="ECO:0007669"/>
    <property type="project" value="UniProtKB-KW"/>
</dbReference>
<dbReference type="GO" id="GO:0007291">
    <property type="term" value="P:sperm individualization"/>
    <property type="evidence" value="ECO:0000250"/>
    <property type="project" value="UniProtKB"/>
</dbReference>
<dbReference type="GO" id="GO:0007286">
    <property type="term" value="P:spermatid development"/>
    <property type="evidence" value="ECO:0000250"/>
    <property type="project" value="UniProtKB"/>
</dbReference>
<dbReference type="GO" id="GO:0007601">
    <property type="term" value="P:visual perception"/>
    <property type="evidence" value="ECO:0007669"/>
    <property type="project" value="UniProtKB-KW"/>
</dbReference>
<dbReference type="CDD" id="cd19680">
    <property type="entry name" value="UBR-box_UBR4"/>
    <property type="match status" value="1"/>
</dbReference>
<dbReference type="InterPro" id="IPR016024">
    <property type="entry name" value="ARM-type_fold"/>
</dbReference>
<dbReference type="InterPro" id="IPR025704">
    <property type="entry name" value="E3_Ub_ligase_UBR4_C"/>
</dbReference>
<dbReference type="InterPro" id="IPR045841">
    <property type="entry name" value="E3_UBR4_N"/>
</dbReference>
<dbReference type="InterPro" id="IPR045189">
    <property type="entry name" value="UBR4-like"/>
</dbReference>
<dbReference type="InterPro" id="IPR056530">
    <property type="entry name" value="UBR4-like_dom"/>
</dbReference>
<dbReference type="InterPro" id="IPR047509">
    <property type="entry name" value="UBR4-like_UBR-box"/>
</dbReference>
<dbReference type="InterPro" id="IPR036322">
    <property type="entry name" value="WD40_repeat_dom_sf"/>
</dbReference>
<dbReference type="InterPro" id="IPR003126">
    <property type="entry name" value="Znf_UBR"/>
</dbReference>
<dbReference type="PANTHER" id="PTHR21725">
    <property type="entry name" value="E3 UBIQUITIN-PROTEIN LIGASE UBR4"/>
    <property type="match status" value="1"/>
</dbReference>
<dbReference type="PANTHER" id="PTHR21725:SF1">
    <property type="entry name" value="E3 UBIQUITIN-PROTEIN LIGASE UBR4"/>
    <property type="match status" value="1"/>
</dbReference>
<dbReference type="Pfam" id="PF13764">
    <property type="entry name" value="E3_UbLigase_R4"/>
    <property type="match status" value="1"/>
</dbReference>
<dbReference type="Pfam" id="PF19423">
    <property type="entry name" value="E3_UBR4_N"/>
    <property type="match status" value="3"/>
</dbReference>
<dbReference type="Pfam" id="PF24079">
    <property type="entry name" value="UBR4"/>
    <property type="match status" value="1"/>
</dbReference>
<dbReference type="Pfam" id="PF02207">
    <property type="entry name" value="zf-UBR"/>
    <property type="match status" value="1"/>
</dbReference>
<dbReference type="SMART" id="SM00396">
    <property type="entry name" value="ZnF_UBR1"/>
    <property type="match status" value="1"/>
</dbReference>
<dbReference type="SUPFAM" id="SSF48371">
    <property type="entry name" value="ARM repeat"/>
    <property type="match status" value="1"/>
</dbReference>
<dbReference type="SUPFAM" id="SSF50978">
    <property type="entry name" value="WD40 repeat-like"/>
    <property type="match status" value="1"/>
</dbReference>
<dbReference type="PROSITE" id="PS52043">
    <property type="entry name" value="UBR4_E3"/>
    <property type="match status" value="1"/>
</dbReference>
<dbReference type="PROSITE" id="PS51157">
    <property type="entry name" value="ZF_UBR"/>
    <property type="match status" value="1"/>
</dbReference>
<reference evidence="6" key="1">
    <citation type="journal article" date="2005" name="Genome Res.">
        <title>Comparative genome sequencing of Drosophila pseudoobscura: chromosomal, gene, and cis-element evolution.</title>
        <authorList>
            <person name="Richards S."/>
            <person name="Liu Y."/>
            <person name="Bettencourt B.R."/>
            <person name="Hradecky P."/>
            <person name="Letovsky S."/>
            <person name="Nielsen R."/>
            <person name="Thornton K."/>
            <person name="Hubisz M.J."/>
            <person name="Chen R."/>
            <person name="Meisel R.P."/>
            <person name="Couronne O."/>
            <person name="Hua S."/>
            <person name="Smith M.A."/>
            <person name="Zhang P."/>
            <person name="Liu J."/>
            <person name="Bussemaker H.J."/>
            <person name="van Batenburg M.F."/>
            <person name="Howells S.L."/>
            <person name="Scherer S.E."/>
            <person name="Sodergren E."/>
            <person name="Matthews B.B."/>
            <person name="Crosby M.A."/>
            <person name="Schroeder A.J."/>
            <person name="Ortiz-Barrientos D."/>
            <person name="Rives C.M."/>
            <person name="Metzker M.L."/>
            <person name="Muzny D.M."/>
            <person name="Scott G."/>
            <person name="Steffen D."/>
            <person name="Wheeler D.A."/>
            <person name="Worley K.C."/>
            <person name="Havlak P."/>
            <person name="Durbin K.J."/>
            <person name="Egan A."/>
            <person name="Gill R."/>
            <person name="Hume J."/>
            <person name="Morgan M.B."/>
            <person name="Miner G."/>
            <person name="Hamilton C."/>
            <person name="Huang Y."/>
            <person name="Waldron L."/>
            <person name="Verduzco D."/>
            <person name="Clerc-Blankenburg K.P."/>
            <person name="Dubchak I."/>
            <person name="Noor M.A.F."/>
            <person name="Anderson W."/>
            <person name="White K.P."/>
            <person name="Clark A.G."/>
            <person name="Schaeffer S.W."/>
            <person name="Gelbart W.M."/>
            <person name="Weinstock G.M."/>
            <person name="Gibbs R.A."/>
        </authorList>
    </citation>
    <scope>NUCLEOTIDE SEQUENCE [LARGE SCALE GENOMIC DNA]</scope>
    <source>
        <strain>MV2-25 / Tucson 14011-0121.94</strain>
    </source>
</reference>
<feature type="chain" id="PRO_0000245795" description="Protein purity of essence">
    <location>
        <begin position="1"/>
        <end position="5381"/>
    </location>
</feature>
<feature type="domain" description="UZI" evidence="3">
    <location>
        <begin position="5139"/>
        <end position="5374"/>
    </location>
</feature>
<feature type="zinc finger region" description="UBR-type" evidence="2">
    <location>
        <begin position="1815"/>
        <end position="1884"/>
    </location>
</feature>
<feature type="zinc finger region" description="HemiRING-type" evidence="3">
    <location>
        <begin position="5022"/>
        <end position="5136"/>
    </location>
</feature>
<feature type="region of interest" description="Disordered" evidence="4">
    <location>
        <begin position="140"/>
        <end position="174"/>
    </location>
</feature>
<feature type="region of interest" description="Disordered" evidence="4">
    <location>
        <begin position="339"/>
        <end position="364"/>
    </location>
</feature>
<feature type="region of interest" description="Disordered" evidence="4">
    <location>
        <begin position="599"/>
        <end position="621"/>
    </location>
</feature>
<feature type="region of interest" description="Disordered" evidence="4">
    <location>
        <begin position="683"/>
        <end position="709"/>
    </location>
</feature>
<feature type="region of interest" description="Disordered" evidence="4">
    <location>
        <begin position="1162"/>
        <end position="1212"/>
    </location>
</feature>
<feature type="region of interest" description="Disordered" evidence="4">
    <location>
        <begin position="1632"/>
        <end position="1659"/>
    </location>
</feature>
<feature type="region of interest" description="Disordered" evidence="4">
    <location>
        <begin position="1917"/>
        <end position="1939"/>
    </location>
</feature>
<feature type="region of interest" description="Disordered" evidence="4">
    <location>
        <begin position="2443"/>
        <end position="2479"/>
    </location>
</feature>
<feature type="region of interest" description="Disordered" evidence="4">
    <location>
        <begin position="2632"/>
        <end position="2652"/>
    </location>
</feature>
<feature type="region of interest" description="Disordered" evidence="4">
    <location>
        <begin position="3037"/>
        <end position="3143"/>
    </location>
</feature>
<feature type="region of interest" description="Disordered" evidence="4">
    <location>
        <begin position="3537"/>
        <end position="3562"/>
    </location>
</feature>
<feature type="region of interest" description="Disordered" evidence="4">
    <location>
        <begin position="4247"/>
        <end position="4280"/>
    </location>
</feature>
<feature type="region of interest" description="UBR4 E3 catalytic module" evidence="3">
    <location>
        <begin position="4904"/>
        <end position="5374"/>
    </location>
</feature>
<feature type="compositionally biased region" description="Low complexity" evidence="4">
    <location>
        <begin position="339"/>
        <end position="350"/>
    </location>
</feature>
<feature type="compositionally biased region" description="Low complexity" evidence="4">
    <location>
        <begin position="690"/>
        <end position="709"/>
    </location>
</feature>
<feature type="compositionally biased region" description="Low complexity" evidence="4">
    <location>
        <begin position="1167"/>
        <end position="1176"/>
    </location>
</feature>
<feature type="compositionally biased region" description="Polar residues" evidence="4">
    <location>
        <begin position="1632"/>
        <end position="1646"/>
    </location>
</feature>
<feature type="compositionally biased region" description="Basic and acidic residues" evidence="4">
    <location>
        <begin position="1647"/>
        <end position="1658"/>
    </location>
</feature>
<feature type="compositionally biased region" description="Polar residues" evidence="4">
    <location>
        <begin position="1920"/>
        <end position="1930"/>
    </location>
</feature>
<feature type="compositionally biased region" description="Polar residues" evidence="4">
    <location>
        <begin position="2470"/>
        <end position="2479"/>
    </location>
</feature>
<feature type="compositionally biased region" description="Polar residues" evidence="4">
    <location>
        <begin position="2643"/>
        <end position="2652"/>
    </location>
</feature>
<feature type="compositionally biased region" description="Polar residues" evidence="4">
    <location>
        <begin position="3048"/>
        <end position="3058"/>
    </location>
</feature>
<feature type="compositionally biased region" description="Gly residues" evidence="4">
    <location>
        <begin position="3065"/>
        <end position="3075"/>
    </location>
</feature>
<feature type="compositionally biased region" description="Polar residues" evidence="4">
    <location>
        <begin position="3084"/>
        <end position="3104"/>
    </location>
</feature>
<feature type="compositionally biased region" description="Gly residues" evidence="4">
    <location>
        <begin position="3119"/>
        <end position="3132"/>
    </location>
</feature>
<feature type="binding site" evidence="3">
    <location>
        <position position="5025"/>
    </location>
    <ligand>
        <name>Zn(2+)</name>
        <dbReference type="ChEBI" id="CHEBI:29105"/>
    </ligand>
</feature>
<feature type="binding site" evidence="3">
    <location>
        <position position="5028"/>
    </location>
    <ligand>
        <name>Zn(2+)</name>
        <dbReference type="ChEBI" id="CHEBI:29105"/>
    </ligand>
</feature>
<feature type="binding site" evidence="3">
    <location>
        <position position="5074"/>
    </location>
    <ligand>
        <name>Zn(2+)</name>
        <dbReference type="ChEBI" id="CHEBI:29105"/>
    </ligand>
</feature>
<feature type="binding site" evidence="3">
    <location>
        <position position="5077"/>
    </location>
    <ligand>
        <name>Zn(2+)</name>
        <dbReference type="ChEBI" id="CHEBI:29105"/>
    </ligand>
</feature>
<evidence type="ECO:0000250" key="1">
    <source>
        <dbReference type="UniProtKB" id="Q9VLT5"/>
    </source>
</evidence>
<evidence type="ECO:0000255" key="2">
    <source>
        <dbReference type="PROSITE-ProRule" id="PRU00508"/>
    </source>
</evidence>
<evidence type="ECO:0000255" key="3">
    <source>
        <dbReference type="PROSITE-ProRule" id="PRU01388"/>
    </source>
</evidence>
<evidence type="ECO:0000256" key="4">
    <source>
        <dbReference type="SAM" id="MobiDB-lite"/>
    </source>
</evidence>
<evidence type="ECO:0000305" key="5"/>
<evidence type="ECO:0000312" key="6">
    <source>
        <dbReference type="EMBL" id="EAL32985.1"/>
    </source>
</evidence>
<accession>Q29L39</accession>
<gene>
    <name evidence="1" type="primary">poe</name>
    <name type="ORF">GA13010</name>
</gene>